<dbReference type="EMBL" id="FO080280">
    <property type="protein sequence ID" value="CCD62562.1"/>
    <property type="molecule type" value="Genomic_DNA"/>
</dbReference>
<dbReference type="PIR" id="F88533">
    <property type="entry name" value="F88533"/>
</dbReference>
<dbReference type="RefSeq" id="NP_498893.1">
    <property type="nucleotide sequence ID" value="NM_066492.4"/>
</dbReference>
<dbReference type="SMR" id="P34296"/>
<dbReference type="BioGRID" id="41409">
    <property type="interactions" value="7"/>
</dbReference>
<dbReference type="DIP" id="DIP-27483N"/>
<dbReference type="FunCoup" id="P34296">
    <property type="interactions" value="1217"/>
</dbReference>
<dbReference type="IntAct" id="P34296">
    <property type="interactions" value="6"/>
</dbReference>
<dbReference type="STRING" id="6239.C06E1.1.1"/>
<dbReference type="PaxDb" id="6239-C06E1.1"/>
<dbReference type="PeptideAtlas" id="P34296"/>
<dbReference type="EnsemblMetazoa" id="C06E1.1.1">
    <property type="protein sequence ID" value="C06E1.1.1"/>
    <property type="gene ID" value="WBGene00015518"/>
</dbReference>
<dbReference type="GeneID" id="176205"/>
<dbReference type="KEGG" id="cel:CELE_C06E1.1"/>
<dbReference type="UCSC" id="C06E1.1">
    <property type="organism name" value="c. elegans"/>
</dbReference>
<dbReference type="AGR" id="WB:WBGene00015518"/>
<dbReference type="CTD" id="176205"/>
<dbReference type="WormBase" id="C06E1.1">
    <property type="protein sequence ID" value="CE00054"/>
    <property type="gene ID" value="WBGene00015518"/>
</dbReference>
<dbReference type="eggNOG" id="KOG1725">
    <property type="taxonomic scope" value="Eukaryota"/>
</dbReference>
<dbReference type="HOGENOM" id="CLU_138752_0_0_1"/>
<dbReference type="InParanoid" id="P34296"/>
<dbReference type="OMA" id="DNILLYW"/>
<dbReference type="OrthoDB" id="5871872at2759"/>
<dbReference type="PhylomeDB" id="P34296"/>
<dbReference type="PRO" id="PR:P34296"/>
<dbReference type="Proteomes" id="UP000001940">
    <property type="component" value="Chromosome III"/>
</dbReference>
<dbReference type="Bgee" id="WBGene00015518">
    <property type="expression patterns" value="Expressed in pharyngeal muscle cell (C elegans) and 3 other cell types or tissues"/>
</dbReference>
<dbReference type="InterPro" id="IPR004345">
    <property type="entry name" value="TB2_DP1_HVA22"/>
</dbReference>
<dbReference type="Pfam" id="PF03134">
    <property type="entry name" value="TB2_DP1_HVA22"/>
    <property type="match status" value="1"/>
</dbReference>
<gene>
    <name type="ORF">C06E1.1</name>
</gene>
<feature type="chain" id="PRO_0000065155" description="Uncharacterized protein C06E1.1">
    <location>
        <begin position="1"/>
        <end position="161"/>
    </location>
</feature>
<proteinExistence type="evidence at protein level"/>
<comment type="interaction">
    <interactant intactId="EBI-318589">
        <id>P34296</id>
    </interactant>
    <interactant intactId="EBI-314363">
        <id>Q18964</id>
        <label>wdfy-2</label>
    </interactant>
    <organismsDiffer>false</organismsDiffer>
    <experiments>3</experiments>
</comment>
<protein>
    <recommendedName>
        <fullName>Uncharacterized protein C06E1.1</fullName>
    </recommendedName>
</protein>
<reference key="1">
    <citation type="journal article" date="1994" name="Nature">
        <title>2.2 Mb of contiguous nucleotide sequence from chromosome III of C. elegans.</title>
        <authorList>
            <person name="Wilson R."/>
            <person name="Ainscough R."/>
            <person name="Anderson K."/>
            <person name="Baynes C."/>
            <person name="Berks M."/>
            <person name="Bonfield J."/>
            <person name="Burton J."/>
            <person name="Connell M."/>
            <person name="Copsey T."/>
            <person name="Cooper J."/>
            <person name="Coulson A."/>
            <person name="Craxton M."/>
            <person name="Dear S."/>
            <person name="Du Z."/>
            <person name="Durbin R."/>
            <person name="Favello A."/>
            <person name="Fraser A."/>
            <person name="Fulton L."/>
            <person name="Gardner A."/>
            <person name="Green P."/>
            <person name="Hawkins T."/>
            <person name="Hillier L."/>
            <person name="Jier M."/>
            <person name="Johnston L."/>
            <person name="Jones M."/>
            <person name="Kershaw J."/>
            <person name="Kirsten J."/>
            <person name="Laisster N."/>
            <person name="Latreille P."/>
            <person name="Lightning J."/>
            <person name="Lloyd C."/>
            <person name="Mortimore B."/>
            <person name="O'Callaghan M."/>
            <person name="Parsons J."/>
            <person name="Percy C."/>
            <person name="Rifken L."/>
            <person name="Roopra A."/>
            <person name="Saunders D."/>
            <person name="Shownkeen R."/>
            <person name="Sims M."/>
            <person name="Smaldon N."/>
            <person name="Smith A."/>
            <person name="Smith M."/>
            <person name="Sonnhammer E."/>
            <person name="Staden R."/>
            <person name="Sulston J."/>
            <person name="Thierry-Mieg J."/>
            <person name="Thomas K."/>
            <person name="Vaudin M."/>
            <person name="Vaughan K."/>
            <person name="Waterston R."/>
            <person name="Watson A."/>
            <person name="Weinstock L."/>
            <person name="Wilkinson-Sproat J."/>
            <person name="Wohldman P."/>
        </authorList>
    </citation>
    <scope>NUCLEOTIDE SEQUENCE [LARGE SCALE GENOMIC DNA]</scope>
    <source>
        <strain>Bristol N2</strain>
    </source>
</reference>
<reference key="2">
    <citation type="journal article" date="1998" name="Science">
        <title>Genome sequence of the nematode C. elegans: a platform for investigating biology.</title>
        <authorList>
            <consortium name="The C. elegans sequencing consortium"/>
        </authorList>
    </citation>
    <scope>NUCLEOTIDE SEQUENCE [LARGE SCALE GENOMIC DNA]</scope>
    <source>
        <strain>Bristol N2</strain>
    </source>
</reference>
<sequence length="161" mass="18747">MATIIAKIESKINEYLKARNKEDWKEKTFTQAEKFSGIPRERIVSMAFLMLSIYVLLGNFLPLFSHIICIFWPVKESFMILRQQKNPSDNILLYWILYAMVSLFDYSALPGVPFYYFAKTGLFLSITTNGFDKLKEWSEPALKFTETWVLVTPPPPGEEEN</sequence>
<keyword id="KW-1185">Reference proteome</keyword>
<organism>
    <name type="scientific">Caenorhabditis elegans</name>
    <dbReference type="NCBI Taxonomy" id="6239"/>
    <lineage>
        <taxon>Eukaryota</taxon>
        <taxon>Metazoa</taxon>
        <taxon>Ecdysozoa</taxon>
        <taxon>Nematoda</taxon>
        <taxon>Chromadorea</taxon>
        <taxon>Rhabditida</taxon>
        <taxon>Rhabditina</taxon>
        <taxon>Rhabditomorpha</taxon>
        <taxon>Rhabditoidea</taxon>
        <taxon>Rhabditidae</taxon>
        <taxon>Peloderinae</taxon>
        <taxon>Caenorhabditis</taxon>
    </lineage>
</organism>
<name>YKQ1_CAEEL</name>
<accession>P34296</accession>